<accession>Q1BHS0</accession>
<comment type="function">
    <text evidence="1">Catalyzes the reversible conversion of 2-phosphoglycerate (2-PG) into phosphoenolpyruvate (PEP). It is essential for the degradation of carbohydrates via glycolysis.</text>
</comment>
<comment type="catalytic activity">
    <reaction evidence="1">
        <text>(2R)-2-phosphoglycerate = phosphoenolpyruvate + H2O</text>
        <dbReference type="Rhea" id="RHEA:10164"/>
        <dbReference type="ChEBI" id="CHEBI:15377"/>
        <dbReference type="ChEBI" id="CHEBI:58289"/>
        <dbReference type="ChEBI" id="CHEBI:58702"/>
        <dbReference type="EC" id="4.2.1.11"/>
    </reaction>
</comment>
<comment type="cofactor">
    <cofactor evidence="1">
        <name>Mg(2+)</name>
        <dbReference type="ChEBI" id="CHEBI:18420"/>
    </cofactor>
    <text evidence="1">Binds a second Mg(2+) ion via substrate during catalysis.</text>
</comment>
<comment type="pathway">
    <text evidence="1">Carbohydrate degradation; glycolysis; pyruvate from D-glyceraldehyde 3-phosphate: step 4/5.</text>
</comment>
<comment type="subcellular location">
    <subcellularLocation>
        <location evidence="1">Cytoplasm</location>
    </subcellularLocation>
    <subcellularLocation>
        <location evidence="1">Secreted</location>
    </subcellularLocation>
    <subcellularLocation>
        <location evidence="1">Cell surface</location>
    </subcellularLocation>
    <text evidence="1">Fractions of enolase are present in both the cytoplasm and on the cell surface.</text>
</comment>
<comment type="similarity">
    <text evidence="1">Belongs to the enolase family.</text>
</comment>
<evidence type="ECO:0000255" key="1">
    <source>
        <dbReference type="HAMAP-Rule" id="MF_00318"/>
    </source>
</evidence>
<feature type="chain" id="PRO_0000267007" description="Enolase">
    <location>
        <begin position="1"/>
        <end position="427"/>
    </location>
</feature>
<feature type="active site" description="Proton donor" evidence="1">
    <location>
        <position position="205"/>
    </location>
</feature>
<feature type="active site" description="Proton acceptor" evidence="1">
    <location>
        <position position="337"/>
    </location>
</feature>
<feature type="binding site" evidence="1">
    <location>
        <position position="163"/>
    </location>
    <ligand>
        <name>(2R)-2-phosphoglycerate</name>
        <dbReference type="ChEBI" id="CHEBI:58289"/>
    </ligand>
</feature>
<feature type="binding site" evidence="1">
    <location>
        <position position="242"/>
    </location>
    <ligand>
        <name>Mg(2+)</name>
        <dbReference type="ChEBI" id="CHEBI:18420"/>
    </ligand>
</feature>
<feature type="binding site" evidence="1">
    <location>
        <position position="285"/>
    </location>
    <ligand>
        <name>Mg(2+)</name>
        <dbReference type="ChEBI" id="CHEBI:18420"/>
    </ligand>
</feature>
<feature type="binding site" evidence="1">
    <location>
        <position position="312"/>
    </location>
    <ligand>
        <name>Mg(2+)</name>
        <dbReference type="ChEBI" id="CHEBI:18420"/>
    </ligand>
</feature>
<feature type="binding site" evidence="1">
    <location>
        <position position="337"/>
    </location>
    <ligand>
        <name>(2R)-2-phosphoglycerate</name>
        <dbReference type="ChEBI" id="CHEBI:58289"/>
    </ligand>
</feature>
<feature type="binding site" evidence="1">
    <location>
        <position position="366"/>
    </location>
    <ligand>
        <name>(2R)-2-phosphoglycerate</name>
        <dbReference type="ChEBI" id="CHEBI:58289"/>
    </ligand>
</feature>
<feature type="binding site" evidence="1">
    <location>
        <position position="367"/>
    </location>
    <ligand>
        <name>(2R)-2-phosphoglycerate</name>
        <dbReference type="ChEBI" id="CHEBI:58289"/>
    </ligand>
</feature>
<feature type="binding site" evidence="1">
    <location>
        <position position="388"/>
    </location>
    <ligand>
        <name>(2R)-2-phosphoglycerate</name>
        <dbReference type="ChEBI" id="CHEBI:58289"/>
    </ligand>
</feature>
<name>ENO_BURO1</name>
<gene>
    <name evidence="1" type="primary">eno</name>
    <name type="ordered locus">Bcen_5970</name>
</gene>
<dbReference type="EC" id="4.2.1.11" evidence="1"/>
<dbReference type="EMBL" id="CP000380">
    <property type="protein sequence ID" value="ABF80835.1"/>
    <property type="molecule type" value="Genomic_DNA"/>
</dbReference>
<dbReference type="SMR" id="Q1BHS0"/>
<dbReference type="HOGENOM" id="CLU_031223_2_1_4"/>
<dbReference type="UniPathway" id="UPA00109">
    <property type="reaction ID" value="UER00187"/>
</dbReference>
<dbReference type="GO" id="GO:0009986">
    <property type="term" value="C:cell surface"/>
    <property type="evidence" value="ECO:0007669"/>
    <property type="project" value="UniProtKB-SubCell"/>
</dbReference>
<dbReference type="GO" id="GO:0005576">
    <property type="term" value="C:extracellular region"/>
    <property type="evidence" value="ECO:0007669"/>
    <property type="project" value="UniProtKB-SubCell"/>
</dbReference>
<dbReference type="GO" id="GO:0000015">
    <property type="term" value="C:phosphopyruvate hydratase complex"/>
    <property type="evidence" value="ECO:0007669"/>
    <property type="project" value="InterPro"/>
</dbReference>
<dbReference type="GO" id="GO:0000287">
    <property type="term" value="F:magnesium ion binding"/>
    <property type="evidence" value="ECO:0007669"/>
    <property type="project" value="UniProtKB-UniRule"/>
</dbReference>
<dbReference type="GO" id="GO:0004634">
    <property type="term" value="F:phosphopyruvate hydratase activity"/>
    <property type="evidence" value="ECO:0007669"/>
    <property type="project" value="UniProtKB-UniRule"/>
</dbReference>
<dbReference type="GO" id="GO:0006096">
    <property type="term" value="P:glycolytic process"/>
    <property type="evidence" value="ECO:0007669"/>
    <property type="project" value="UniProtKB-UniRule"/>
</dbReference>
<dbReference type="CDD" id="cd03313">
    <property type="entry name" value="enolase"/>
    <property type="match status" value="1"/>
</dbReference>
<dbReference type="FunFam" id="3.20.20.120:FF:000001">
    <property type="entry name" value="Enolase"/>
    <property type="match status" value="1"/>
</dbReference>
<dbReference type="FunFam" id="3.30.390.10:FF:000001">
    <property type="entry name" value="Enolase"/>
    <property type="match status" value="1"/>
</dbReference>
<dbReference type="Gene3D" id="3.20.20.120">
    <property type="entry name" value="Enolase-like C-terminal domain"/>
    <property type="match status" value="1"/>
</dbReference>
<dbReference type="Gene3D" id="3.30.390.10">
    <property type="entry name" value="Enolase-like, N-terminal domain"/>
    <property type="match status" value="1"/>
</dbReference>
<dbReference type="HAMAP" id="MF_00318">
    <property type="entry name" value="Enolase"/>
    <property type="match status" value="1"/>
</dbReference>
<dbReference type="InterPro" id="IPR000941">
    <property type="entry name" value="Enolase"/>
</dbReference>
<dbReference type="InterPro" id="IPR036849">
    <property type="entry name" value="Enolase-like_C_sf"/>
</dbReference>
<dbReference type="InterPro" id="IPR029017">
    <property type="entry name" value="Enolase-like_N"/>
</dbReference>
<dbReference type="InterPro" id="IPR020810">
    <property type="entry name" value="Enolase_C"/>
</dbReference>
<dbReference type="InterPro" id="IPR020809">
    <property type="entry name" value="Enolase_CS"/>
</dbReference>
<dbReference type="InterPro" id="IPR020811">
    <property type="entry name" value="Enolase_N"/>
</dbReference>
<dbReference type="NCBIfam" id="TIGR01060">
    <property type="entry name" value="eno"/>
    <property type="match status" value="1"/>
</dbReference>
<dbReference type="PANTHER" id="PTHR11902">
    <property type="entry name" value="ENOLASE"/>
    <property type="match status" value="1"/>
</dbReference>
<dbReference type="PANTHER" id="PTHR11902:SF1">
    <property type="entry name" value="ENOLASE"/>
    <property type="match status" value="1"/>
</dbReference>
<dbReference type="Pfam" id="PF00113">
    <property type="entry name" value="Enolase_C"/>
    <property type="match status" value="1"/>
</dbReference>
<dbReference type="Pfam" id="PF03952">
    <property type="entry name" value="Enolase_N"/>
    <property type="match status" value="1"/>
</dbReference>
<dbReference type="PIRSF" id="PIRSF001400">
    <property type="entry name" value="Enolase"/>
    <property type="match status" value="1"/>
</dbReference>
<dbReference type="PRINTS" id="PR00148">
    <property type="entry name" value="ENOLASE"/>
</dbReference>
<dbReference type="SFLD" id="SFLDF00002">
    <property type="entry name" value="enolase"/>
    <property type="match status" value="1"/>
</dbReference>
<dbReference type="SFLD" id="SFLDG00178">
    <property type="entry name" value="enolase"/>
    <property type="match status" value="1"/>
</dbReference>
<dbReference type="SMART" id="SM01192">
    <property type="entry name" value="Enolase_C"/>
    <property type="match status" value="1"/>
</dbReference>
<dbReference type="SMART" id="SM01193">
    <property type="entry name" value="Enolase_N"/>
    <property type="match status" value="1"/>
</dbReference>
<dbReference type="SUPFAM" id="SSF51604">
    <property type="entry name" value="Enolase C-terminal domain-like"/>
    <property type="match status" value="1"/>
</dbReference>
<dbReference type="SUPFAM" id="SSF54826">
    <property type="entry name" value="Enolase N-terminal domain-like"/>
    <property type="match status" value="1"/>
</dbReference>
<dbReference type="PROSITE" id="PS00164">
    <property type="entry name" value="ENOLASE"/>
    <property type="match status" value="1"/>
</dbReference>
<organism>
    <name type="scientific">Burkholderia orbicola (strain AU 1054)</name>
    <dbReference type="NCBI Taxonomy" id="331271"/>
    <lineage>
        <taxon>Bacteria</taxon>
        <taxon>Pseudomonadati</taxon>
        <taxon>Pseudomonadota</taxon>
        <taxon>Betaproteobacteria</taxon>
        <taxon>Burkholderiales</taxon>
        <taxon>Burkholderiaceae</taxon>
        <taxon>Burkholderia</taxon>
        <taxon>Burkholderia cepacia complex</taxon>
        <taxon>Burkholderia orbicola</taxon>
    </lineage>
</organism>
<reference key="1">
    <citation type="submission" date="2006-05" db="EMBL/GenBank/DDBJ databases">
        <title>Complete sequence of chromosome 3 of Burkholderia cenocepacia AU 1054.</title>
        <authorList>
            <consortium name="US DOE Joint Genome Institute"/>
            <person name="Copeland A."/>
            <person name="Lucas S."/>
            <person name="Lapidus A."/>
            <person name="Barry K."/>
            <person name="Detter J.C."/>
            <person name="Glavina del Rio T."/>
            <person name="Hammon N."/>
            <person name="Israni S."/>
            <person name="Dalin E."/>
            <person name="Tice H."/>
            <person name="Pitluck S."/>
            <person name="Chain P."/>
            <person name="Malfatti S."/>
            <person name="Shin M."/>
            <person name="Vergez L."/>
            <person name="Schmutz J."/>
            <person name="Larimer F."/>
            <person name="Land M."/>
            <person name="Hauser L."/>
            <person name="Kyrpides N."/>
            <person name="Lykidis A."/>
            <person name="LiPuma J.J."/>
            <person name="Konstantinidis K."/>
            <person name="Tiedje J.M."/>
            <person name="Richardson P."/>
        </authorList>
    </citation>
    <scope>NUCLEOTIDE SEQUENCE [LARGE SCALE GENOMIC DNA]</scope>
    <source>
        <strain>AU 1054</strain>
    </source>
</reference>
<proteinExistence type="inferred from homology"/>
<protein>
    <recommendedName>
        <fullName evidence="1">Enolase</fullName>
        <ecNumber evidence="1">4.2.1.11</ecNumber>
    </recommendedName>
    <alternativeName>
        <fullName evidence="1">2-phospho-D-glycerate hydro-lyase</fullName>
    </alternativeName>
    <alternativeName>
        <fullName evidence="1">2-phosphoglycerate dehydratase</fullName>
    </alternativeName>
</protein>
<keyword id="KW-0963">Cytoplasm</keyword>
<keyword id="KW-0324">Glycolysis</keyword>
<keyword id="KW-0456">Lyase</keyword>
<keyword id="KW-0460">Magnesium</keyword>
<keyword id="KW-0479">Metal-binding</keyword>
<keyword id="KW-0964">Secreted</keyword>
<sequence length="427" mass="45687">MSAIVDIIGREILDSRGNPTVECDVLLESGTMGRAAVPSGASTGSREAIELRDGEAGRYNGKGVLKAVEHINTEISEAIMGLDASEQAFLDKTLLELDGTDNKSRLGANAMLAVSMAVAKAAAEEAGLPLYRYFGGSGAMQLPVPMMNIVNGGAHANNSLDIQEFMIVPVSQPTFREALRCGAEVFHALKKILSDRGMSTAVGDEGGFAPNFGSNDECLSTILQAIEKAGYRAGEDVLLALDCAASEFYHDGKYQLAGEGLQLSSAEFTDYLATLADKFPIVSIEDGMHESDWDGWKLLTDRLGKKVQLVGDDLFVTNTRILKEGIEKGIANSILIKINQIGTLTETFAAIEMAKRAGYTAVISHRSGETEDSTIADIAVGLNAGQIKTGSLSRSDRISKYNQLLRIEEDLGDIASYPGKSAFYNLR</sequence>